<feature type="chain" id="PRO_0000251306" description="Large ribosomal subunit protein uL18">
    <location>
        <begin position="1"/>
        <end position="121"/>
    </location>
</feature>
<proteinExistence type="inferred from homology"/>
<keyword id="KW-0687">Ribonucleoprotein</keyword>
<keyword id="KW-0689">Ribosomal protein</keyword>
<keyword id="KW-0694">RNA-binding</keyword>
<keyword id="KW-0699">rRNA-binding</keyword>
<name>RL18_DEHMC</name>
<protein>
    <recommendedName>
        <fullName evidence="1">Large ribosomal subunit protein uL18</fullName>
    </recommendedName>
    <alternativeName>
        <fullName evidence="2">50S ribosomal protein L18</fullName>
    </alternativeName>
</protein>
<gene>
    <name evidence="1" type="primary">rplR</name>
    <name type="ordered locus">cbdbA454</name>
</gene>
<accession>Q3ZZQ8</accession>
<comment type="function">
    <text evidence="1">This is one of the proteins that bind and probably mediate the attachment of the 5S RNA into the large ribosomal subunit, where it forms part of the central protuberance.</text>
</comment>
<comment type="subunit">
    <text evidence="1">Part of the 50S ribosomal subunit; part of the 5S rRNA/L5/L18/L25 subcomplex. Contacts the 5S and 23S rRNAs.</text>
</comment>
<comment type="similarity">
    <text evidence="1">Belongs to the universal ribosomal protein uL18 family.</text>
</comment>
<organism>
    <name type="scientific">Dehalococcoides mccartyi (strain CBDB1)</name>
    <dbReference type="NCBI Taxonomy" id="255470"/>
    <lineage>
        <taxon>Bacteria</taxon>
        <taxon>Bacillati</taxon>
        <taxon>Chloroflexota</taxon>
        <taxon>Dehalococcoidia</taxon>
        <taxon>Dehalococcoidales</taxon>
        <taxon>Dehalococcoidaceae</taxon>
        <taxon>Dehalococcoides</taxon>
    </lineage>
</organism>
<dbReference type="EMBL" id="AJ965256">
    <property type="protein sequence ID" value="CAI82655.1"/>
    <property type="molecule type" value="Genomic_DNA"/>
</dbReference>
<dbReference type="RefSeq" id="WP_010936267.1">
    <property type="nucleotide sequence ID" value="NC_007356.1"/>
</dbReference>
<dbReference type="SMR" id="Q3ZZQ8"/>
<dbReference type="GeneID" id="3230240"/>
<dbReference type="KEGG" id="deh:cbdbA454"/>
<dbReference type="HOGENOM" id="CLU_098841_0_1_0"/>
<dbReference type="Proteomes" id="UP000000433">
    <property type="component" value="Chromosome"/>
</dbReference>
<dbReference type="GO" id="GO:0005737">
    <property type="term" value="C:cytoplasm"/>
    <property type="evidence" value="ECO:0007669"/>
    <property type="project" value="UniProtKB-ARBA"/>
</dbReference>
<dbReference type="GO" id="GO:1990904">
    <property type="term" value="C:ribonucleoprotein complex"/>
    <property type="evidence" value="ECO:0007669"/>
    <property type="project" value="UniProtKB-KW"/>
</dbReference>
<dbReference type="GO" id="GO:0005840">
    <property type="term" value="C:ribosome"/>
    <property type="evidence" value="ECO:0007669"/>
    <property type="project" value="UniProtKB-KW"/>
</dbReference>
<dbReference type="GO" id="GO:0008097">
    <property type="term" value="F:5S rRNA binding"/>
    <property type="evidence" value="ECO:0007669"/>
    <property type="project" value="TreeGrafter"/>
</dbReference>
<dbReference type="GO" id="GO:0003735">
    <property type="term" value="F:structural constituent of ribosome"/>
    <property type="evidence" value="ECO:0007669"/>
    <property type="project" value="InterPro"/>
</dbReference>
<dbReference type="GO" id="GO:0006412">
    <property type="term" value="P:translation"/>
    <property type="evidence" value="ECO:0007669"/>
    <property type="project" value="UniProtKB-UniRule"/>
</dbReference>
<dbReference type="CDD" id="cd00432">
    <property type="entry name" value="Ribosomal_L18_L5e"/>
    <property type="match status" value="1"/>
</dbReference>
<dbReference type="FunFam" id="3.30.420.100:FF:000001">
    <property type="entry name" value="50S ribosomal protein L18"/>
    <property type="match status" value="1"/>
</dbReference>
<dbReference type="Gene3D" id="3.30.420.100">
    <property type="match status" value="1"/>
</dbReference>
<dbReference type="HAMAP" id="MF_01337_B">
    <property type="entry name" value="Ribosomal_uL18_B"/>
    <property type="match status" value="1"/>
</dbReference>
<dbReference type="InterPro" id="IPR004389">
    <property type="entry name" value="Ribosomal_uL18_bac-type"/>
</dbReference>
<dbReference type="InterPro" id="IPR005484">
    <property type="entry name" value="Ribosomal_uL18_bac/euk"/>
</dbReference>
<dbReference type="NCBIfam" id="TIGR00060">
    <property type="entry name" value="L18_bact"/>
    <property type="match status" value="1"/>
</dbReference>
<dbReference type="PANTHER" id="PTHR12899">
    <property type="entry name" value="39S RIBOSOMAL PROTEIN L18, MITOCHONDRIAL"/>
    <property type="match status" value="1"/>
</dbReference>
<dbReference type="PANTHER" id="PTHR12899:SF3">
    <property type="entry name" value="LARGE RIBOSOMAL SUBUNIT PROTEIN UL18M"/>
    <property type="match status" value="1"/>
</dbReference>
<dbReference type="Pfam" id="PF00861">
    <property type="entry name" value="Ribosomal_L18p"/>
    <property type="match status" value="1"/>
</dbReference>
<dbReference type="SUPFAM" id="SSF53137">
    <property type="entry name" value="Translational machinery components"/>
    <property type="match status" value="1"/>
</dbReference>
<evidence type="ECO:0000255" key="1">
    <source>
        <dbReference type="HAMAP-Rule" id="MF_01337"/>
    </source>
</evidence>
<evidence type="ECO:0000305" key="2"/>
<reference key="1">
    <citation type="journal article" date="2005" name="Nat. Biotechnol.">
        <title>Genome sequence of the chlorinated compound-respiring bacterium Dehalococcoides species strain CBDB1.</title>
        <authorList>
            <person name="Kube M."/>
            <person name="Beck A."/>
            <person name="Zinder S.H."/>
            <person name="Kuhl H."/>
            <person name="Reinhardt R."/>
            <person name="Adrian L."/>
        </authorList>
    </citation>
    <scope>NUCLEOTIDE SEQUENCE [LARGE SCALE GENOMIC DNA]</scope>
    <source>
        <strain>CBDB1</strain>
    </source>
</reference>
<sequence length="121" mass="13331">MAKVNAREARIVRHERLRKKVSGTEARPRLCVFRSIENIYTQVINDNCGSTLVQASTKDAELKAELDGKTKTEQAVVIGNLIAKRSLEAGISEVVFDRGGYKYHGRVKALAEAARSGGLKF</sequence>